<sequence length="352" mass="39140">MSTAVTILTDTWTRREKRFDGHAKILAIGTAIPANWVDQTTYPDFYFRITNSEHLLEYKEKFRRICNKSKIRKRHLVITEELLKKNPNLCTYNDASLNTRQDILVSEVPKLGKEAAMKAIKEWGRPISEITHLVFCTSSGVDMPGADFQLAKLLGLSSSVNRLMMYQQGCNAGAVMLRLAKDLAENNKGGRVLVVCSEVMLSVFRGPSLQQEDNLLAQCLFGDGSAAVIVGTEPRPGLETPLFELVSAAQTTIPDTDSYLKLQLREMGLTFHCSKAVPSLITQNIEDCLVKAFEPFGISDWNSIFWILHPGGNAILDGVEEKLGLEPEKLRASRDVLSQYGNLTSACVLFKP</sequence>
<reference key="1">
    <citation type="journal article" date="1995" name="Proc. Natl. Acad. Sci. U.S.A.">
        <title>Evolution of the chalcone synthase gene family in the genus Ipomoea.</title>
        <authorList>
            <person name="Durbin M.L."/>
            <person name="Learn G.H."/>
            <person name="Huttley G.A."/>
            <person name="Clegg M.T."/>
        </authorList>
    </citation>
    <scope>NUCLEOTIDE SEQUENCE [GENOMIC DNA]</scope>
</reference>
<gene>
    <name type="primary">CHSC</name>
</gene>
<organism>
    <name type="scientific">Ipomoea purpurea</name>
    <name type="common">Common morning glory</name>
    <name type="synonym">Pharbitis purpurea</name>
    <dbReference type="NCBI Taxonomy" id="4121"/>
    <lineage>
        <taxon>Eukaryota</taxon>
        <taxon>Viridiplantae</taxon>
        <taxon>Streptophyta</taxon>
        <taxon>Embryophyta</taxon>
        <taxon>Tracheophyta</taxon>
        <taxon>Spermatophyta</taxon>
        <taxon>Magnoliopsida</taxon>
        <taxon>eudicotyledons</taxon>
        <taxon>Gunneridae</taxon>
        <taxon>Pentapetalae</taxon>
        <taxon>asterids</taxon>
        <taxon>lamiids</taxon>
        <taxon>Solanales</taxon>
        <taxon>Convolvulaceae</taxon>
        <taxon>Ipomoeeae</taxon>
        <taxon>Ipomoea</taxon>
    </lineage>
</organism>
<name>CHSC_IPOPU</name>
<comment type="function">
    <text>The primary product of this enzyme is 4,2',4',6'-tetrahydroxychalcone (also termed naringenin-chalcone or chalcone) which can under specific conditions spontaneously isomerize into naringenin.</text>
</comment>
<comment type="catalytic activity">
    <reaction evidence="1">
        <text>(E)-4-coumaroyl-CoA + 3 malonyl-CoA + 3 H(+) = 2',4,4',6'-tetrahydroxychalcone + 3 CO2 + 4 CoA</text>
        <dbReference type="Rhea" id="RHEA:11128"/>
        <dbReference type="ChEBI" id="CHEBI:15378"/>
        <dbReference type="ChEBI" id="CHEBI:15413"/>
        <dbReference type="ChEBI" id="CHEBI:16526"/>
        <dbReference type="ChEBI" id="CHEBI:57287"/>
        <dbReference type="ChEBI" id="CHEBI:57384"/>
        <dbReference type="ChEBI" id="CHEBI:85008"/>
        <dbReference type="EC" id="2.3.1.74"/>
    </reaction>
</comment>
<comment type="pathway">
    <text>Secondary metabolite biosynthesis; flavonoid biosynthesis.</text>
</comment>
<comment type="similarity">
    <text evidence="2">Belongs to the thiolase-like superfamily. Chalcone/stilbene synthases family.</text>
</comment>
<proteinExistence type="inferred from homology"/>
<dbReference type="EC" id="2.3.1.74"/>
<dbReference type="EMBL" id="U15949">
    <property type="protein sequence ID" value="AAC49031.1"/>
    <property type="molecule type" value="Genomic_DNA"/>
</dbReference>
<dbReference type="PIR" id="T10956">
    <property type="entry name" value="T10956"/>
</dbReference>
<dbReference type="SMR" id="P48399"/>
<dbReference type="UniPathway" id="UPA00154"/>
<dbReference type="GO" id="GO:0016210">
    <property type="term" value="F:naringenin-chalcone synthase activity"/>
    <property type="evidence" value="ECO:0007669"/>
    <property type="project" value="UniProtKB-EC"/>
</dbReference>
<dbReference type="GO" id="GO:0009813">
    <property type="term" value="P:flavonoid biosynthetic process"/>
    <property type="evidence" value="ECO:0007669"/>
    <property type="project" value="UniProtKB-UniPathway"/>
</dbReference>
<dbReference type="GO" id="GO:0030639">
    <property type="term" value="P:polyketide biosynthetic process"/>
    <property type="evidence" value="ECO:0007669"/>
    <property type="project" value="TreeGrafter"/>
</dbReference>
<dbReference type="CDD" id="cd00831">
    <property type="entry name" value="CHS_like"/>
    <property type="match status" value="1"/>
</dbReference>
<dbReference type="FunFam" id="3.40.47.10:FF:000014">
    <property type="entry name" value="Chalcone synthase 1"/>
    <property type="match status" value="1"/>
</dbReference>
<dbReference type="FunFam" id="3.40.47.10:FF:000025">
    <property type="entry name" value="Chalcone synthase 2"/>
    <property type="match status" value="1"/>
</dbReference>
<dbReference type="Gene3D" id="3.40.47.10">
    <property type="match status" value="2"/>
</dbReference>
<dbReference type="InterPro" id="IPR012328">
    <property type="entry name" value="Chalcone/stilbene_synt_C"/>
</dbReference>
<dbReference type="InterPro" id="IPR001099">
    <property type="entry name" value="Chalcone/stilbene_synt_N"/>
</dbReference>
<dbReference type="InterPro" id="IPR018088">
    <property type="entry name" value="Chalcone/stilbene_synthase_AS"/>
</dbReference>
<dbReference type="InterPro" id="IPR011141">
    <property type="entry name" value="Polyketide_synthase_type-III"/>
</dbReference>
<dbReference type="InterPro" id="IPR016039">
    <property type="entry name" value="Thiolase-like"/>
</dbReference>
<dbReference type="PANTHER" id="PTHR11877:SF104">
    <property type="entry name" value="CHALCONE SYNTHASE"/>
    <property type="match status" value="1"/>
</dbReference>
<dbReference type="PANTHER" id="PTHR11877">
    <property type="entry name" value="HYDROXYMETHYLGLUTARYL-COA SYNTHASE"/>
    <property type="match status" value="1"/>
</dbReference>
<dbReference type="Pfam" id="PF02797">
    <property type="entry name" value="Chal_sti_synt_C"/>
    <property type="match status" value="1"/>
</dbReference>
<dbReference type="Pfam" id="PF00195">
    <property type="entry name" value="Chal_sti_synt_N"/>
    <property type="match status" value="1"/>
</dbReference>
<dbReference type="PIRSF" id="PIRSF000451">
    <property type="entry name" value="PKS_III"/>
    <property type="match status" value="1"/>
</dbReference>
<dbReference type="SUPFAM" id="SSF53901">
    <property type="entry name" value="Thiolase-like"/>
    <property type="match status" value="2"/>
</dbReference>
<dbReference type="PROSITE" id="PS00441">
    <property type="entry name" value="CHALCONE_SYNTH"/>
    <property type="match status" value="1"/>
</dbReference>
<keyword id="KW-0012">Acyltransferase</keyword>
<keyword id="KW-0284">Flavonoid biosynthesis</keyword>
<keyword id="KW-0808">Transferase</keyword>
<evidence type="ECO:0000255" key="1">
    <source>
        <dbReference type="PROSITE-ProRule" id="PRU10023"/>
    </source>
</evidence>
<evidence type="ECO:0000305" key="2"/>
<feature type="chain" id="PRO_0000215994" description="Chalcone synthase C">
    <location>
        <begin position="1"/>
        <end position="352" status="greater than"/>
    </location>
</feature>
<feature type="active site" evidence="1">
    <location>
        <position position="170"/>
    </location>
</feature>
<feature type="non-terminal residue">
    <location>
        <position position="352"/>
    </location>
</feature>
<protein>
    <recommendedName>
        <fullName>Chalcone synthase C</fullName>
        <ecNumber>2.3.1.74</ecNumber>
    </recommendedName>
    <alternativeName>
        <fullName>Naringenin-chalcone synthase C</fullName>
        <shortName>CHS-C</shortName>
    </alternativeName>
</protein>
<accession>P48399</accession>